<accession>Q48JX8</accession>
<protein>
    <recommendedName>
        <fullName evidence="1">Ribosomal RNA large subunit methyltransferase K/L</fullName>
    </recommendedName>
    <domain>
        <recommendedName>
            <fullName evidence="1">23S rRNA m2G2445 methyltransferase</fullName>
            <ecNumber evidence="1">2.1.1.173</ecNumber>
        </recommendedName>
        <alternativeName>
            <fullName evidence="1">rRNA (guanine-N(2)-)-methyltransferase RlmL</fullName>
        </alternativeName>
    </domain>
    <domain>
        <recommendedName>
            <fullName evidence="1">23S rRNA m7G2069 methyltransferase</fullName>
            <ecNumber evidence="1">2.1.1.264</ecNumber>
        </recommendedName>
        <alternativeName>
            <fullName evidence="1">rRNA (guanine-N(7)-)-methyltransferase RlmK</fullName>
        </alternativeName>
    </domain>
</protein>
<keyword id="KW-0963">Cytoplasm</keyword>
<keyword id="KW-0489">Methyltransferase</keyword>
<keyword id="KW-0694">RNA-binding</keyword>
<keyword id="KW-0698">rRNA processing</keyword>
<keyword id="KW-0949">S-adenosyl-L-methionine</keyword>
<keyword id="KW-0808">Transferase</keyword>
<comment type="function">
    <text evidence="1">Specifically methylates the guanine in position 2445 (m2G2445) and the guanine in position 2069 (m7G2069) of 23S rRNA.</text>
</comment>
<comment type="catalytic activity">
    <reaction evidence="1">
        <text>guanosine(2445) in 23S rRNA + S-adenosyl-L-methionine = N(2)-methylguanosine(2445) in 23S rRNA + S-adenosyl-L-homocysteine + H(+)</text>
        <dbReference type="Rhea" id="RHEA:42740"/>
        <dbReference type="Rhea" id="RHEA-COMP:10215"/>
        <dbReference type="Rhea" id="RHEA-COMP:10216"/>
        <dbReference type="ChEBI" id="CHEBI:15378"/>
        <dbReference type="ChEBI" id="CHEBI:57856"/>
        <dbReference type="ChEBI" id="CHEBI:59789"/>
        <dbReference type="ChEBI" id="CHEBI:74269"/>
        <dbReference type="ChEBI" id="CHEBI:74481"/>
        <dbReference type="EC" id="2.1.1.173"/>
    </reaction>
</comment>
<comment type="catalytic activity">
    <reaction evidence="1">
        <text>guanosine(2069) in 23S rRNA + S-adenosyl-L-methionine = N(2)-methylguanosine(2069) in 23S rRNA + S-adenosyl-L-homocysteine + H(+)</text>
        <dbReference type="Rhea" id="RHEA:43772"/>
        <dbReference type="Rhea" id="RHEA-COMP:10688"/>
        <dbReference type="Rhea" id="RHEA-COMP:10689"/>
        <dbReference type="ChEBI" id="CHEBI:15378"/>
        <dbReference type="ChEBI" id="CHEBI:57856"/>
        <dbReference type="ChEBI" id="CHEBI:59789"/>
        <dbReference type="ChEBI" id="CHEBI:74269"/>
        <dbReference type="ChEBI" id="CHEBI:74481"/>
        <dbReference type="EC" id="2.1.1.264"/>
    </reaction>
</comment>
<comment type="subcellular location">
    <subcellularLocation>
        <location evidence="1">Cytoplasm</location>
    </subcellularLocation>
</comment>
<comment type="similarity">
    <text evidence="1">Belongs to the methyltransferase superfamily. RlmKL family.</text>
</comment>
<comment type="sequence caution" evidence="2">
    <conflict type="erroneous initiation">
        <sequence resource="EMBL-CDS" id="AAZ34132"/>
    </conflict>
    <text>Extended N-terminus.</text>
</comment>
<evidence type="ECO:0000255" key="1">
    <source>
        <dbReference type="HAMAP-Rule" id="MF_01858"/>
    </source>
</evidence>
<evidence type="ECO:0000305" key="2"/>
<feature type="chain" id="PRO_0000366796" description="Ribosomal RNA large subunit methyltransferase K/L">
    <location>
        <begin position="1"/>
        <end position="750"/>
    </location>
</feature>
<feature type="domain" description="THUMP" evidence="1">
    <location>
        <begin position="46"/>
        <end position="157"/>
    </location>
</feature>
<sequence length="750" mass="84735">MSDRYELFLTCPKGLEGLLAEEATALGLQETREHTSAIRGSADMETAYRLCLWSRLANRVLLVLKRFPMKDAEDLYHGVLDVEWQDHLESDGTIAVEFSGHGSGIDNTHFGALKVKDAIVDKLRTPDGERPSVDKINPDLRVHLRLDRGEAILSLDLSGHSLHQRGYRLQQGAAPLKENLAAAILIRAGWPRIAAEGGALADPMCGVGTFLVEAGMIAADIAPNIKRERWGFSAWLGHVPALWRKLHDEALARAEAGLAKTPSWIRGYEADPRLIQPGRNNIERAGLSDWIKVYQGEVATFEPRPDQNQKGLVICNPPYGERLGDEASLLYLYQNLGERLRQACLNWEAAVFTGAPDLGKRMGIRSHKQYSFWNGALPCKLLLIKVTPDQFVTGERRTPEQRQIERENPVEVEVVERKLNKNGNPIKPEPVVVEQARLSEGGQMFANRLQKNLKLMGKWVRREGIDRYRVYDADMPEYSLAIDLYHDWVHVQEYAAPKSIDPEKASARLFDALAAIPQALNIDKNRVVIKRRERQSGTKQYERQSAQGQFLEVSEGGVKLLVNLTDYLDTGLFLDHRPMRMRIQREASGKRFLNLFAYTATASVHAAKGGARSTTSIDLSRTYLDWARRNLSLNGFSDKNRLEQGDVMAWLQANRDEYDLIFIDPPTFSNSKRMEGIFDVQRDQVELIDLAMARLAPGGVLYFSNNFRKFVLDENLSQRYAVEDITAQTIDQDFARNGKIHRAWKIMARA</sequence>
<proteinExistence type="inferred from homology"/>
<organism>
    <name type="scientific">Pseudomonas savastanoi pv. phaseolicola (strain 1448A / Race 6)</name>
    <name type="common">Pseudomonas syringae pv. phaseolicola (strain 1448A / Race 6)</name>
    <dbReference type="NCBI Taxonomy" id="264730"/>
    <lineage>
        <taxon>Bacteria</taxon>
        <taxon>Pseudomonadati</taxon>
        <taxon>Pseudomonadota</taxon>
        <taxon>Gammaproteobacteria</taxon>
        <taxon>Pseudomonadales</taxon>
        <taxon>Pseudomonadaceae</taxon>
        <taxon>Pseudomonas</taxon>
    </lineage>
</organism>
<gene>
    <name evidence="1" type="primary">rlmL</name>
    <name type="ordered locus">PSPPH_2079</name>
</gene>
<name>RLMKL_PSE14</name>
<dbReference type="EC" id="2.1.1.173" evidence="1"/>
<dbReference type="EC" id="2.1.1.264" evidence="1"/>
<dbReference type="EMBL" id="CP000058">
    <property type="protein sequence ID" value="AAZ34132.1"/>
    <property type="status" value="ALT_INIT"/>
    <property type="molecule type" value="Genomic_DNA"/>
</dbReference>
<dbReference type="SMR" id="Q48JX8"/>
<dbReference type="KEGG" id="psp:PSPPH_2079"/>
<dbReference type="eggNOG" id="COG0116">
    <property type="taxonomic scope" value="Bacteria"/>
</dbReference>
<dbReference type="eggNOG" id="COG1092">
    <property type="taxonomic scope" value="Bacteria"/>
</dbReference>
<dbReference type="HOGENOM" id="CLU_014042_2_0_6"/>
<dbReference type="Proteomes" id="UP000000551">
    <property type="component" value="Chromosome"/>
</dbReference>
<dbReference type="GO" id="GO:0005737">
    <property type="term" value="C:cytoplasm"/>
    <property type="evidence" value="ECO:0007669"/>
    <property type="project" value="UniProtKB-SubCell"/>
</dbReference>
<dbReference type="GO" id="GO:0052915">
    <property type="term" value="F:23S rRNA (guanine(2445)-N(2))-methyltransferase activity"/>
    <property type="evidence" value="ECO:0007669"/>
    <property type="project" value="UniProtKB-UniRule"/>
</dbReference>
<dbReference type="GO" id="GO:0003723">
    <property type="term" value="F:RNA binding"/>
    <property type="evidence" value="ECO:0007669"/>
    <property type="project" value="UniProtKB-KW"/>
</dbReference>
<dbReference type="GO" id="GO:0070043">
    <property type="term" value="F:rRNA (guanine-N7-)-methyltransferase activity"/>
    <property type="evidence" value="ECO:0007669"/>
    <property type="project" value="UniProtKB-UniRule"/>
</dbReference>
<dbReference type="CDD" id="cd02440">
    <property type="entry name" value="AdoMet_MTases"/>
    <property type="match status" value="1"/>
</dbReference>
<dbReference type="CDD" id="cd11715">
    <property type="entry name" value="THUMP_AdoMetMT"/>
    <property type="match status" value="1"/>
</dbReference>
<dbReference type="Gene3D" id="3.30.2130.30">
    <property type="match status" value="1"/>
</dbReference>
<dbReference type="Gene3D" id="3.30.750.80">
    <property type="entry name" value="RNA methyltransferase domain (HRMD) like"/>
    <property type="match status" value="1"/>
</dbReference>
<dbReference type="Gene3D" id="3.40.50.150">
    <property type="entry name" value="Vaccinia Virus protein VP39"/>
    <property type="match status" value="2"/>
</dbReference>
<dbReference type="HAMAP" id="MF_01858">
    <property type="entry name" value="23SrRNA_methyltr_KL"/>
    <property type="match status" value="1"/>
</dbReference>
<dbReference type="InterPro" id="IPR017244">
    <property type="entry name" value="23SrRNA_methyltr_KL"/>
</dbReference>
<dbReference type="InterPro" id="IPR002052">
    <property type="entry name" value="DNA_methylase_N6_adenine_CS"/>
</dbReference>
<dbReference type="InterPro" id="IPR000241">
    <property type="entry name" value="RlmKL-like_Mtase"/>
</dbReference>
<dbReference type="InterPro" id="IPR054170">
    <property type="entry name" value="RlmL_1st"/>
</dbReference>
<dbReference type="InterPro" id="IPR019614">
    <property type="entry name" value="SAM-dep_methyl-trfase"/>
</dbReference>
<dbReference type="InterPro" id="IPR029063">
    <property type="entry name" value="SAM-dependent_MTases_sf"/>
</dbReference>
<dbReference type="InterPro" id="IPR004114">
    <property type="entry name" value="THUMP_dom"/>
</dbReference>
<dbReference type="NCBIfam" id="NF008748">
    <property type="entry name" value="PRK11783.1"/>
    <property type="match status" value="1"/>
</dbReference>
<dbReference type="PANTHER" id="PTHR47313">
    <property type="entry name" value="RIBOSOMAL RNA LARGE SUBUNIT METHYLTRANSFERASE K/L"/>
    <property type="match status" value="1"/>
</dbReference>
<dbReference type="PANTHER" id="PTHR47313:SF1">
    <property type="entry name" value="RIBOSOMAL RNA LARGE SUBUNIT METHYLTRANSFERASE K_L"/>
    <property type="match status" value="1"/>
</dbReference>
<dbReference type="Pfam" id="PF10672">
    <property type="entry name" value="Methyltrans_SAM"/>
    <property type="match status" value="1"/>
</dbReference>
<dbReference type="Pfam" id="PF22020">
    <property type="entry name" value="RlmL_1st"/>
    <property type="match status" value="1"/>
</dbReference>
<dbReference type="Pfam" id="PF02926">
    <property type="entry name" value="THUMP"/>
    <property type="match status" value="1"/>
</dbReference>
<dbReference type="Pfam" id="PF01170">
    <property type="entry name" value="UPF0020"/>
    <property type="match status" value="1"/>
</dbReference>
<dbReference type="PIRSF" id="PIRSF037618">
    <property type="entry name" value="RNA_Mtase_bacteria_prd"/>
    <property type="match status" value="1"/>
</dbReference>
<dbReference type="SMART" id="SM00981">
    <property type="entry name" value="THUMP"/>
    <property type="match status" value="1"/>
</dbReference>
<dbReference type="SUPFAM" id="SSF53335">
    <property type="entry name" value="S-adenosyl-L-methionine-dependent methyltransferases"/>
    <property type="match status" value="2"/>
</dbReference>
<dbReference type="PROSITE" id="PS51165">
    <property type="entry name" value="THUMP"/>
    <property type="match status" value="1"/>
</dbReference>
<reference key="1">
    <citation type="journal article" date="2005" name="J. Bacteriol.">
        <title>Whole-genome sequence analysis of Pseudomonas syringae pv. phaseolicola 1448A reveals divergence among pathovars in genes involved in virulence and transposition.</title>
        <authorList>
            <person name="Joardar V."/>
            <person name="Lindeberg M."/>
            <person name="Jackson R.W."/>
            <person name="Selengut J."/>
            <person name="Dodson R."/>
            <person name="Brinkac L.M."/>
            <person name="Daugherty S.C."/>
            <person name="DeBoy R.T."/>
            <person name="Durkin A.S."/>
            <person name="Gwinn Giglio M."/>
            <person name="Madupu R."/>
            <person name="Nelson W.C."/>
            <person name="Rosovitz M.J."/>
            <person name="Sullivan S.A."/>
            <person name="Crabtree J."/>
            <person name="Creasy T."/>
            <person name="Davidsen T.M."/>
            <person name="Haft D.H."/>
            <person name="Zafar N."/>
            <person name="Zhou L."/>
            <person name="Halpin R."/>
            <person name="Holley T."/>
            <person name="Khouri H.M."/>
            <person name="Feldblyum T.V."/>
            <person name="White O."/>
            <person name="Fraser C.M."/>
            <person name="Chatterjee A.K."/>
            <person name="Cartinhour S."/>
            <person name="Schneider D."/>
            <person name="Mansfield J.W."/>
            <person name="Collmer A."/>
            <person name="Buell R."/>
        </authorList>
    </citation>
    <scope>NUCLEOTIDE SEQUENCE [LARGE SCALE GENOMIC DNA]</scope>
    <source>
        <strain>1448A / Race 6</strain>
    </source>
</reference>